<accession>B0TX39</accession>
<feature type="chain" id="PRO_1000082806" description="Ribosomal RNA large subunit methyltransferase H">
    <location>
        <begin position="1"/>
        <end position="155"/>
    </location>
</feature>
<feature type="binding site" evidence="1">
    <location>
        <position position="73"/>
    </location>
    <ligand>
        <name>S-adenosyl-L-methionine</name>
        <dbReference type="ChEBI" id="CHEBI:59789"/>
    </ligand>
</feature>
<feature type="binding site" evidence="1">
    <location>
        <position position="104"/>
    </location>
    <ligand>
        <name>S-adenosyl-L-methionine</name>
        <dbReference type="ChEBI" id="CHEBI:59789"/>
    </ligand>
</feature>
<feature type="binding site" evidence="1">
    <location>
        <begin position="123"/>
        <end position="128"/>
    </location>
    <ligand>
        <name>S-adenosyl-L-methionine</name>
        <dbReference type="ChEBI" id="CHEBI:59789"/>
    </ligand>
</feature>
<evidence type="ECO:0000255" key="1">
    <source>
        <dbReference type="HAMAP-Rule" id="MF_00658"/>
    </source>
</evidence>
<name>RLMH_FRAP2</name>
<proteinExistence type="inferred from homology"/>
<dbReference type="EC" id="2.1.1.177" evidence="1"/>
<dbReference type="EMBL" id="CP000937">
    <property type="protein sequence ID" value="ABZ87297.1"/>
    <property type="molecule type" value="Genomic_DNA"/>
</dbReference>
<dbReference type="SMR" id="B0TX39"/>
<dbReference type="KEGG" id="fph:Fphi_1073"/>
<dbReference type="eggNOG" id="COG1576">
    <property type="taxonomic scope" value="Bacteria"/>
</dbReference>
<dbReference type="HOGENOM" id="CLU_100552_1_0_6"/>
<dbReference type="GO" id="GO:0005737">
    <property type="term" value="C:cytoplasm"/>
    <property type="evidence" value="ECO:0007669"/>
    <property type="project" value="UniProtKB-SubCell"/>
</dbReference>
<dbReference type="GO" id="GO:0070038">
    <property type="term" value="F:rRNA (pseudouridine-N3-)-methyltransferase activity"/>
    <property type="evidence" value="ECO:0007669"/>
    <property type="project" value="UniProtKB-UniRule"/>
</dbReference>
<dbReference type="CDD" id="cd18081">
    <property type="entry name" value="RlmH-like"/>
    <property type="match status" value="1"/>
</dbReference>
<dbReference type="Gene3D" id="3.40.1280.10">
    <property type="match status" value="1"/>
</dbReference>
<dbReference type="HAMAP" id="MF_00658">
    <property type="entry name" value="23SrRNA_methyltr_H"/>
    <property type="match status" value="1"/>
</dbReference>
<dbReference type="InterPro" id="IPR029028">
    <property type="entry name" value="Alpha/beta_knot_MTases"/>
</dbReference>
<dbReference type="InterPro" id="IPR003742">
    <property type="entry name" value="RlmH-like"/>
</dbReference>
<dbReference type="InterPro" id="IPR029026">
    <property type="entry name" value="tRNA_m1G_MTases_N"/>
</dbReference>
<dbReference type="NCBIfam" id="NF000986">
    <property type="entry name" value="PRK00103.1-4"/>
    <property type="match status" value="1"/>
</dbReference>
<dbReference type="NCBIfam" id="TIGR00246">
    <property type="entry name" value="tRNA_RlmH_YbeA"/>
    <property type="match status" value="1"/>
</dbReference>
<dbReference type="PANTHER" id="PTHR33603">
    <property type="entry name" value="METHYLTRANSFERASE"/>
    <property type="match status" value="1"/>
</dbReference>
<dbReference type="PANTHER" id="PTHR33603:SF1">
    <property type="entry name" value="RIBOSOMAL RNA LARGE SUBUNIT METHYLTRANSFERASE H"/>
    <property type="match status" value="1"/>
</dbReference>
<dbReference type="Pfam" id="PF02590">
    <property type="entry name" value="SPOUT_MTase"/>
    <property type="match status" value="1"/>
</dbReference>
<dbReference type="PIRSF" id="PIRSF004505">
    <property type="entry name" value="MT_bac"/>
    <property type="match status" value="1"/>
</dbReference>
<dbReference type="SUPFAM" id="SSF75217">
    <property type="entry name" value="alpha/beta knot"/>
    <property type="match status" value="1"/>
</dbReference>
<reference key="1">
    <citation type="submission" date="2007-12" db="EMBL/GenBank/DDBJ databases">
        <title>Complete sequence of chromosome of Francisella philomiragia subsp. philomiragia ATCC 25017.</title>
        <authorList>
            <consortium name="US DOE Joint Genome Institute"/>
            <person name="Copeland A."/>
            <person name="Lucas S."/>
            <person name="Lapidus A."/>
            <person name="Barry K."/>
            <person name="Detter J.C."/>
            <person name="Glavina del Rio T."/>
            <person name="Hammon N."/>
            <person name="Israni S."/>
            <person name="Dalin E."/>
            <person name="Tice H."/>
            <person name="Pitluck S."/>
            <person name="Chain P."/>
            <person name="Malfatti S."/>
            <person name="Shin M."/>
            <person name="Vergez L."/>
            <person name="Schmutz J."/>
            <person name="Larimer F."/>
            <person name="Land M."/>
            <person name="Hauser L."/>
            <person name="Richardson P."/>
        </authorList>
    </citation>
    <scope>NUCLEOTIDE SEQUENCE [LARGE SCALE GENOMIC DNA]</scope>
    <source>
        <strain>ATCC 25017 / CCUG 19701 / FSC 153 / O#319-036</strain>
    </source>
</reference>
<sequence>MKIRILSLGEKPPKWVSEGYDEYKKRLSKSIPLELIELPIAKRTKTGNPKLWMEQEAKTILTKLSDSDHLVILDVNSKIISTEELAEKMQNWKFNNPNVVILIGGPDGIDQSIKNIAKEKISISKMTFPHPLVRIIIAEQLYRAYTILEGHPYHK</sequence>
<comment type="function">
    <text evidence="1">Specifically methylates the pseudouridine at position 1915 (m3Psi1915) in 23S rRNA.</text>
</comment>
<comment type="catalytic activity">
    <reaction evidence="1">
        <text>pseudouridine(1915) in 23S rRNA + S-adenosyl-L-methionine = N(3)-methylpseudouridine(1915) in 23S rRNA + S-adenosyl-L-homocysteine + H(+)</text>
        <dbReference type="Rhea" id="RHEA:42752"/>
        <dbReference type="Rhea" id="RHEA-COMP:10221"/>
        <dbReference type="Rhea" id="RHEA-COMP:10222"/>
        <dbReference type="ChEBI" id="CHEBI:15378"/>
        <dbReference type="ChEBI" id="CHEBI:57856"/>
        <dbReference type="ChEBI" id="CHEBI:59789"/>
        <dbReference type="ChEBI" id="CHEBI:65314"/>
        <dbReference type="ChEBI" id="CHEBI:74486"/>
        <dbReference type="EC" id="2.1.1.177"/>
    </reaction>
</comment>
<comment type="subunit">
    <text evidence="1">Homodimer.</text>
</comment>
<comment type="subcellular location">
    <subcellularLocation>
        <location evidence="1">Cytoplasm</location>
    </subcellularLocation>
</comment>
<comment type="similarity">
    <text evidence="1">Belongs to the RNA methyltransferase RlmH family.</text>
</comment>
<keyword id="KW-0963">Cytoplasm</keyword>
<keyword id="KW-0489">Methyltransferase</keyword>
<keyword id="KW-0698">rRNA processing</keyword>
<keyword id="KW-0949">S-adenosyl-L-methionine</keyword>
<keyword id="KW-0808">Transferase</keyword>
<protein>
    <recommendedName>
        <fullName evidence="1">Ribosomal RNA large subunit methyltransferase H</fullName>
        <ecNumber evidence="1">2.1.1.177</ecNumber>
    </recommendedName>
    <alternativeName>
        <fullName evidence="1">23S rRNA (pseudouridine1915-N3)-methyltransferase</fullName>
    </alternativeName>
    <alternativeName>
        <fullName evidence="1">23S rRNA m3Psi1915 methyltransferase</fullName>
    </alternativeName>
    <alternativeName>
        <fullName evidence="1">rRNA (pseudouridine-N3-)-methyltransferase RlmH</fullName>
    </alternativeName>
</protein>
<organism>
    <name type="scientific">Francisella philomiragia subsp. philomiragia (strain ATCC 25017 / CCUG 19701 / FSC 153 / O#319-036)</name>
    <dbReference type="NCBI Taxonomy" id="484022"/>
    <lineage>
        <taxon>Bacteria</taxon>
        <taxon>Pseudomonadati</taxon>
        <taxon>Pseudomonadota</taxon>
        <taxon>Gammaproteobacteria</taxon>
        <taxon>Thiotrichales</taxon>
        <taxon>Francisellaceae</taxon>
        <taxon>Francisella</taxon>
    </lineage>
</organism>
<gene>
    <name evidence="1" type="primary">rlmH</name>
    <name type="ordered locus">Fphi_1073</name>
</gene>